<feature type="chain" id="PRO_0000412931" description="PHD finger protein ALFIN-LIKE 3">
    <location>
        <begin position="1"/>
        <end position="250"/>
    </location>
</feature>
<feature type="zinc finger region" description="PHD-type" evidence="2">
    <location>
        <begin position="194"/>
        <end position="246"/>
    </location>
</feature>
<feature type="region of interest" description="Disordered" evidence="3">
    <location>
        <begin position="146"/>
        <end position="192"/>
    </location>
</feature>
<feature type="compositionally biased region" description="Low complexity" evidence="3">
    <location>
        <begin position="149"/>
        <end position="163"/>
    </location>
</feature>
<feature type="compositionally biased region" description="Acidic residues" evidence="3">
    <location>
        <begin position="179"/>
        <end position="192"/>
    </location>
</feature>
<feature type="site" description="Histone H3K4me3 binding" evidence="1">
    <location>
        <position position="210"/>
    </location>
</feature>
<feature type="site" description="Histone H3K4me3 binding" evidence="1">
    <location>
        <position position="214"/>
    </location>
</feature>
<feature type="site" description="Histone H3K4me3 binding" evidence="1">
    <location>
        <position position="219"/>
    </location>
</feature>
<feature type="modified residue" description="N-acetylmethionine" evidence="6">
    <location>
        <position position="1"/>
    </location>
</feature>
<feature type="turn" evidence="7">
    <location>
        <begin position="198"/>
        <end position="200"/>
    </location>
</feature>
<feature type="strand" evidence="7">
    <location>
        <begin position="209"/>
        <end position="212"/>
    </location>
</feature>
<feature type="turn" evidence="7">
    <location>
        <begin position="214"/>
        <end position="216"/>
    </location>
</feature>
<feature type="strand" evidence="7">
    <location>
        <begin position="219"/>
        <end position="221"/>
    </location>
</feature>
<feature type="turn" evidence="7">
    <location>
        <begin position="222"/>
        <end position="226"/>
    </location>
</feature>
<feature type="helix" evidence="7">
    <location>
        <begin position="229"/>
        <end position="232"/>
    </location>
</feature>
<feature type="turn" evidence="7">
    <location>
        <begin position="241"/>
        <end position="244"/>
    </location>
</feature>
<dbReference type="EMBL" id="AL138639">
    <property type="protein sequence ID" value="CAB87196.1"/>
    <property type="molecule type" value="Genomic_DNA"/>
</dbReference>
<dbReference type="EMBL" id="CP002686">
    <property type="protein sequence ID" value="AEE77752.1"/>
    <property type="molecule type" value="Genomic_DNA"/>
</dbReference>
<dbReference type="EMBL" id="AY062851">
    <property type="protein sequence ID" value="AAL32929.1"/>
    <property type="molecule type" value="mRNA"/>
</dbReference>
<dbReference type="EMBL" id="AY114574">
    <property type="protein sequence ID" value="AAM47893.1"/>
    <property type="molecule type" value="mRNA"/>
</dbReference>
<dbReference type="PIR" id="T47337">
    <property type="entry name" value="T47337"/>
</dbReference>
<dbReference type="RefSeq" id="NP_189865.1">
    <property type="nucleotide sequence ID" value="NM_114147.5"/>
</dbReference>
<dbReference type="PDB" id="5YC3">
    <property type="method" value="X-ray"/>
    <property type="resolution" value="2.60 A"/>
    <property type="chains" value="A=191-245"/>
</dbReference>
<dbReference type="PDB" id="5YC4">
    <property type="method" value="X-ray"/>
    <property type="resolution" value="2.70 A"/>
    <property type="chains" value="A=191-245"/>
</dbReference>
<dbReference type="PDBsum" id="5YC3"/>
<dbReference type="PDBsum" id="5YC4"/>
<dbReference type="SMR" id="Q9M2B4"/>
<dbReference type="BioGRID" id="8641">
    <property type="interactions" value="4"/>
</dbReference>
<dbReference type="FunCoup" id="Q9M2B4">
    <property type="interactions" value="123"/>
</dbReference>
<dbReference type="STRING" id="3702.Q9M2B4"/>
<dbReference type="iPTMnet" id="Q9M2B4"/>
<dbReference type="PaxDb" id="3702-AT3G42790.1"/>
<dbReference type="ProteomicsDB" id="245043"/>
<dbReference type="EnsemblPlants" id="AT3G42790.1">
    <property type="protein sequence ID" value="AT3G42790.1"/>
    <property type="gene ID" value="AT3G42790"/>
</dbReference>
<dbReference type="GeneID" id="823316"/>
<dbReference type="Gramene" id="AT3G42790.1">
    <property type="protein sequence ID" value="AT3G42790.1"/>
    <property type="gene ID" value="AT3G42790"/>
</dbReference>
<dbReference type="KEGG" id="ath:AT3G42790"/>
<dbReference type="Araport" id="AT3G42790"/>
<dbReference type="TAIR" id="AT3G42790">
    <property type="gene designation" value="AL3"/>
</dbReference>
<dbReference type="eggNOG" id="KOG1632">
    <property type="taxonomic scope" value="Eukaryota"/>
</dbReference>
<dbReference type="HOGENOM" id="CLU_058315_1_0_1"/>
<dbReference type="InParanoid" id="Q9M2B4"/>
<dbReference type="OMA" id="SRFSFYK"/>
<dbReference type="OrthoDB" id="436852at2759"/>
<dbReference type="PhylomeDB" id="Q9M2B4"/>
<dbReference type="CD-CODE" id="4299E36E">
    <property type="entry name" value="Nucleolus"/>
</dbReference>
<dbReference type="PRO" id="PR:Q9M2B4"/>
<dbReference type="Proteomes" id="UP000006548">
    <property type="component" value="Chromosome 3"/>
</dbReference>
<dbReference type="ExpressionAtlas" id="Q9M2B4">
    <property type="expression patterns" value="baseline and differential"/>
</dbReference>
<dbReference type="GO" id="GO:0005634">
    <property type="term" value="C:nucleus"/>
    <property type="evidence" value="ECO:0000314"/>
    <property type="project" value="TAIR"/>
</dbReference>
<dbReference type="GO" id="GO:0042393">
    <property type="term" value="F:histone binding"/>
    <property type="evidence" value="ECO:0007669"/>
    <property type="project" value="InterPro"/>
</dbReference>
<dbReference type="GO" id="GO:0000976">
    <property type="term" value="F:transcription cis-regulatory region binding"/>
    <property type="evidence" value="ECO:0000353"/>
    <property type="project" value="TAIR"/>
</dbReference>
<dbReference type="GO" id="GO:0008270">
    <property type="term" value="F:zinc ion binding"/>
    <property type="evidence" value="ECO:0007669"/>
    <property type="project" value="UniProtKB-KW"/>
</dbReference>
<dbReference type="GO" id="GO:0006325">
    <property type="term" value="P:chromatin organization"/>
    <property type="evidence" value="ECO:0007669"/>
    <property type="project" value="UniProtKB-KW"/>
</dbReference>
<dbReference type="GO" id="GO:0006355">
    <property type="term" value="P:regulation of DNA-templated transcription"/>
    <property type="evidence" value="ECO:0007669"/>
    <property type="project" value="InterPro"/>
</dbReference>
<dbReference type="CDD" id="cd15613">
    <property type="entry name" value="PHD_AL_plant"/>
    <property type="match status" value="1"/>
</dbReference>
<dbReference type="FunFam" id="3.30.40.10:FF:000306">
    <property type="entry name" value="PHD finger alfin-like protein"/>
    <property type="match status" value="1"/>
</dbReference>
<dbReference type="Gene3D" id="3.30.40.10">
    <property type="entry name" value="Zinc/RING finger domain, C3HC4 (zinc finger)"/>
    <property type="match status" value="1"/>
</dbReference>
<dbReference type="InterPro" id="IPR045104">
    <property type="entry name" value="Alfin"/>
</dbReference>
<dbReference type="InterPro" id="IPR021998">
    <property type="entry name" value="Alfin_N"/>
</dbReference>
<dbReference type="InterPro" id="IPR044104">
    <property type="entry name" value="PHD_AL_plant"/>
</dbReference>
<dbReference type="InterPro" id="IPR019786">
    <property type="entry name" value="Zinc_finger_PHD-type_CS"/>
</dbReference>
<dbReference type="InterPro" id="IPR011011">
    <property type="entry name" value="Znf_FYVE_PHD"/>
</dbReference>
<dbReference type="InterPro" id="IPR001965">
    <property type="entry name" value="Znf_PHD"/>
</dbReference>
<dbReference type="InterPro" id="IPR019787">
    <property type="entry name" value="Znf_PHD-finger"/>
</dbReference>
<dbReference type="InterPro" id="IPR013083">
    <property type="entry name" value="Znf_RING/FYVE/PHD"/>
</dbReference>
<dbReference type="PANTHER" id="PTHR12321">
    <property type="entry name" value="CPG BINDING PROTEIN"/>
    <property type="match status" value="1"/>
</dbReference>
<dbReference type="PANTHER" id="PTHR12321:SF140">
    <property type="entry name" value="PHD FINGER PROTEIN ALFIN-LIKE 3"/>
    <property type="match status" value="1"/>
</dbReference>
<dbReference type="Pfam" id="PF12165">
    <property type="entry name" value="Alfin"/>
    <property type="match status" value="1"/>
</dbReference>
<dbReference type="Pfam" id="PF00628">
    <property type="entry name" value="PHD"/>
    <property type="match status" value="1"/>
</dbReference>
<dbReference type="SMART" id="SM00249">
    <property type="entry name" value="PHD"/>
    <property type="match status" value="1"/>
</dbReference>
<dbReference type="SUPFAM" id="SSF57903">
    <property type="entry name" value="FYVE/PHD zinc finger"/>
    <property type="match status" value="1"/>
</dbReference>
<dbReference type="PROSITE" id="PS01359">
    <property type="entry name" value="ZF_PHD_1"/>
    <property type="match status" value="1"/>
</dbReference>
<dbReference type="PROSITE" id="PS50016">
    <property type="entry name" value="ZF_PHD_2"/>
    <property type="match status" value="1"/>
</dbReference>
<accession>Q9M2B4</accession>
<gene>
    <name type="primary">AL3</name>
    <name type="ordered locus">At3g42790</name>
    <name type="ORF">T21C14_10</name>
</gene>
<keyword id="KW-0002">3D-structure</keyword>
<keyword id="KW-0007">Acetylation</keyword>
<keyword id="KW-0156">Chromatin regulator</keyword>
<keyword id="KW-0479">Metal-binding</keyword>
<keyword id="KW-0539">Nucleus</keyword>
<keyword id="KW-1185">Reference proteome</keyword>
<keyword id="KW-0804">Transcription</keyword>
<keyword id="KW-0805">Transcription regulation</keyword>
<keyword id="KW-0862">Zinc</keyword>
<keyword id="KW-0863">Zinc-finger</keyword>
<reference key="1">
    <citation type="journal article" date="2000" name="Nature">
        <title>Sequence and analysis of chromosome 3 of the plant Arabidopsis thaliana.</title>
        <authorList>
            <person name="Salanoubat M."/>
            <person name="Lemcke K."/>
            <person name="Rieger M."/>
            <person name="Ansorge W."/>
            <person name="Unseld M."/>
            <person name="Fartmann B."/>
            <person name="Valle G."/>
            <person name="Bloecker H."/>
            <person name="Perez-Alonso M."/>
            <person name="Obermaier B."/>
            <person name="Delseny M."/>
            <person name="Boutry M."/>
            <person name="Grivell L.A."/>
            <person name="Mache R."/>
            <person name="Puigdomenech P."/>
            <person name="De Simone V."/>
            <person name="Choisne N."/>
            <person name="Artiguenave F."/>
            <person name="Robert C."/>
            <person name="Brottier P."/>
            <person name="Wincker P."/>
            <person name="Cattolico L."/>
            <person name="Weissenbach J."/>
            <person name="Saurin W."/>
            <person name="Quetier F."/>
            <person name="Schaefer M."/>
            <person name="Mueller-Auer S."/>
            <person name="Gabel C."/>
            <person name="Fuchs M."/>
            <person name="Benes V."/>
            <person name="Wurmbach E."/>
            <person name="Drzonek H."/>
            <person name="Erfle H."/>
            <person name="Jordan N."/>
            <person name="Bangert S."/>
            <person name="Wiedelmann R."/>
            <person name="Kranz H."/>
            <person name="Voss H."/>
            <person name="Holland R."/>
            <person name="Brandt P."/>
            <person name="Nyakatura G."/>
            <person name="Vezzi A."/>
            <person name="D'Angelo M."/>
            <person name="Pallavicini A."/>
            <person name="Toppo S."/>
            <person name="Simionati B."/>
            <person name="Conrad A."/>
            <person name="Hornischer K."/>
            <person name="Kauer G."/>
            <person name="Loehnert T.-H."/>
            <person name="Nordsiek G."/>
            <person name="Reichelt J."/>
            <person name="Scharfe M."/>
            <person name="Schoen O."/>
            <person name="Bargues M."/>
            <person name="Terol J."/>
            <person name="Climent J."/>
            <person name="Navarro P."/>
            <person name="Collado C."/>
            <person name="Perez-Perez A."/>
            <person name="Ottenwaelder B."/>
            <person name="Duchemin D."/>
            <person name="Cooke R."/>
            <person name="Laudie M."/>
            <person name="Berger-Llauro C."/>
            <person name="Purnelle B."/>
            <person name="Masuy D."/>
            <person name="de Haan M."/>
            <person name="Maarse A.C."/>
            <person name="Alcaraz J.-P."/>
            <person name="Cottet A."/>
            <person name="Casacuberta E."/>
            <person name="Monfort A."/>
            <person name="Argiriou A."/>
            <person name="Flores M."/>
            <person name="Liguori R."/>
            <person name="Vitale D."/>
            <person name="Mannhaupt G."/>
            <person name="Haase D."/>
            <person name="Schoof H."/>
            <person name="Rudd S."/>
            <person name="Zaccaria P."/>
            <person name="Mewes H.-W."/>
            <person name="Mayer K.F.X."/>
            <person name="Kaul S."/>
            <person name="Town C.D."/>
            <person name="Koo H.L."/>
            <person name="Tallon L.J."/>
            <person name="Jenkins J."/>
            <person name="Rooney T."/>
            <person name="Rizzo M."/>
            <person name="Walts A."/>
            <person name="Utterback T."/>
            <person name="Fujii C.Y."/>
            <person name="Shea T.P."/>
            <person name="Creasy T.H."/>
            <person name="Haas B."/>
            <person name="Maiti R."/>
            <person name="Wu D."/>
            <person name="Peterson J."/>
            <person name="Van Aken S."/>
            <person name="Pai G."/>
            <person name="Militscher J."/>
            <person name="Sellers P."/>
            <person name="Gill J.E."/>
            <person name="Feldblyum T.V."/>
            <person name="Preuss D."/>
            <person name="Lin X."/>
            <person name="Nierman W.C."/>
            <person name="Salzberg S.L."/>
            <person name="White O."/>
            <person name="Venter J.C."/>
            <person name="Fraser C.M."/>
            <person name="Kaneko T."/>
            <person name="Nakamura Y."/>
            <person name="Sato S."/>
            <person name="Kato T."/>
            <person name="Asamizu E."/>
            <person name="Sasamoto S."/>
            <person name="Kimura T."/>
            <person name="Idesawa K."/>
            <person name="Kawashima K."/>
            <person name="Kishida Y."/>
            <person name="Kiyokawa C."/>
            <person name="Kohara M."/>
            <person name="Matsumoto M."/>
            <person name="Matsuno A."/>
            <person name="Muraki A."/>
            <person name="Nakayama S."/>
            <person name="Nakazaki N."/>
            <person name="Shinpo S."/>
            <person name="Takeuchi C."/>
            <person name="Wada T."/>
            <person name="Watanabe A."/>
            <person name="Yamada M."/>
            <person name="Yasuda M."/>
            <person name="Tabata S."/>
        </authorList>
    </citation>
    <scope>NUCLEOTIDE SEQUENCE [LARGE SCALE GENOMIC DNA]</scope>
    <source>
        <strain>cv. Columbia</strain>
    </source>
</reference>
<reference key="2">
    <citation type="journal article" date="2017" name="Plant J.">
        <title>Araport11: a complete reannotation of the Arabidopsis thaliana reference genome.</title>
        <authorList>
            <person name="Cheng C.Y."/>
            <person name="Krishnakumar V."/>
            <person name="Chan A.P."/>
            <person name="Thibaud-Nissen F."/>
            <person name="Schobel S."/>
            <person name="Town C.D."/>
        </authorList>
    </citation>
    <scope>GENOME REANNOTATION</scope>
    <source>
        <strain>cv. Columbia</strain>
    </source>
</reference>
<reference key="3">
    <citation type="journal article" date="2003" name="Science">
        <title>Empirical analysis of transcriptional activity in the Arabidopsis genome.</title>
        <authorList>
            <person name="Yamada K."/>
            <person name="Lim J."/>
            <person name="Dale J.M."/>
            <person name="Chen H."/>
            <person name="Shinn P."/>
            <person name="Palm C.J."/>
            <person name="Southwick A.M."/>
            <person name="Wu H.C."/>
            <person name="Kim C.J."/>
            <person name="Nguyen M."/>
            <person name="Pham P.K."/>
            <person name="Cheuk R.F."/>
            <person name="Karlin-Newmann G."/>
            <person name="Liu S.X."/>
            <person name="Lam B."/>
            <person name="Sakano H."/>
            <person name="Wu T."/>
            <person name="Yu G."/>
            <person name="Miranda M."/>
            <person name="Quach H.L."/>
            <person name="Tripp M."/>
            <person name="Chang C.H."/>
            <person name="Lee J.M."/>
            <person name="Toriumi M.J."/>
            <person name="Chan M.M."/>
            <person name="Tang C.C."/>
            <person name="Onodera C.S."/>
            <person name="Deng J.M."/>
            <person name="Akiyama K."/>
            <person name="Ansari Y."/>
            <person name="Arakawa T."/>
            <person name="Banh J."/>
            <person name="Banno F."/>
            <person name="Bowser L."/>
            <person name="Brooks S.Y."/>
            <person name="Carninci P."/>
            <person name="Chao Q."/>
            <person name="Choy N."/>
            <person name="Enju A."/>
            <person name="Goldsmith A.D."/>
            <person name="Gurjal M."/>
            <person name="Hansen N.F."/>
            <person name="Hayashizaki Y."/>
            <person name="Johnson-Hopson C."/>
            <person name="Hsuan V.W."/>
            <person name="Iida K."/>
            <person name="Karnes M."/>
            <person name="Khan S."/>
            <person name="Koesema E."/>
            <person name="Ishida J."/>
            <person name="Jiang P.X."/>
            <person name="Jones T."/>
            <person name="Kawai J."/>
            <person name="Kamiya A."/>
            <person name="Meyers C."/>
            <person name="Nakajima M."/>
            <person name="Narusaka M."/>
            <person name="Seki M."/>
            <person name="Sakurai T."/>
            <person name="Satou M."/>
            <person name="Tamse R."/>
            <person name="Vaysberg M."/>
            <person name="Wallender E.K."/>
            <person name="Wong C."/>
            <person name="Yamamura Y."/>
            <person name="Yuan S."/>
            <person name="Shinozaki K."/>
            <person name="Davis R.W."/>
            <person name="Theologis A."/>
            <person name="Ecker J.R."/>
        </authorList>
    </citation>
    <scope>NUCLEOTIDE SEQUENCE [LARGE SCALE MRNA]</scope>
    <source>
        <strain>cv. Columbia</strain>
    </source>
</reference>
<reference key="4">
    <citation type="journal article" date="2009" name="Plant J.">
        <title>Arabidopsis ING and Alfin1-like protein families localize to the nucleus and bind to H3K4me3/2 via plant homeodomain fingers.</title>
        <authorList>
            <person name="Lee W.Y."/>
            <person name="Lee D."/>
            <person name="Chung W.I."/>
            <person name="Kwon C.S."/>
        </authorList>
    </citation>
    <scope>GENE FAMILY</scope>
    <scope>SUBCELLULAR LOCATION</scope>
    <scope>TISSUE SPECIFICITY</scope>
</reference>
<reference key="5">
    <citation type="journal article" date="2012" name="Mol. Cell. Proteomics">
        <title>Comparative large-scale characterisation of plant vs. mammal proteins reveals similar and idiosyncratic N-alpha acetylation features.</title>
        <authorList>
            <person name="Bienvenut W.V."/>
            <person name="Sumpton D."/>
            <person name="Martinez A."/>
            <person name="Lilla S."/>
            <person name="Espagne C."/>
            <person name="Meinnel T."/>
            <person name="Giglione C."/>
        </authorList>
    </citation>
    <scope>ACETYLATION [LARGE SCALE ANALYSIS] AT MET-1</scope>
    <scope>IDENTIFICATION BY MASS SPECTROMETRY [LARGE SCALE ANALYSIS]</scope>
</reference>
<comment type="function">
    <text evidence="1">Histone-binding component that specifically recognizes H3 tails trimethylated on 'Lys-4' (H3K4me3), which mark transcription start sites of virtually all active genes.</text>
</comment>
<comment type="subcellular location">
    <subcellularLocation>
        <location evidence="4">Nucleus</location>
    </subcellularLocation>
</comment>
<comment type="tissue specificity">
    <text evidence="4">Ubiquitously expressed.</text>
</comment>
<comment type="domain">
    <text evidence="1">The PHD-type zinc finger mediates the binding to H3K4me3.</text>
</comment>
<comment type="similarity">
    <text evidence="5">Belongs to the Alfin family.</text>
</comment>
<comment type="caution">
    <text evidence="5">Lacks the Tyr (here Asp-204), a conserved feature of the aromatic cage required for the interaction with histone H3K4me3/2.</text>
</comment>
<sequence length="250" mass="28215">MEGGAALYNPRTVEEVFKDFKGRRTAIVKALTTDVQEFYQQCDPEKENLCLYGLPNEEWEVNLPAEEVPPELPEPALGINFARDGLSEKEWLSLVAIHSDAWLLSVSFYFGSRFSFHKEERKRLFNMINDVPTIFEVVTGMAKAKDKSSAANQNGNKSKSNSKVRTSEGKSSKTKQPKEEDEEIDEDDEDDHGETLCGACGDSDGADEFWICCDLCEKWFHGKCVKITPARAEHIKQYKCPSCSNKRARA</sequence>
<name>ALFL3_ARATH</name>
<evidence type="ECO:0000250" key="1"/>
<evidence type="ECO:0000255" key="2">
    <source>
        <dbReference type="PROSITE-ProRule" id="PRU00146"/>
    </source>
</evidence>
<evidence type="ECO:0000256" key="3">
    <source>
        <dbReference type="SAM" id="MobiDB-lite"/>
    </source>
</evidence>
<evidence type="ECO:0000269" key="4">
    <source>
    </source>
</evidence>
<evidence type="ECO:0000305" key="5"/>
<evidence type="ECO:0007744" key="6">
    <source>
    </source>
</evidence>
<evidence type="ECO:0007829" key="7">
    <source>
        <dbReference type="PDB" id="5YC3"/>
    </source>
</evidence>
<proteinExistence type="evidence at protein level"/>
<protein>
    <recommendedName>
        <fullName>PHD finger protein ALFIN-LIKE 3</fullName>
        <shortName>Protein AL3</shortName>
    </recommendedName>
</protein>
<organism>
    <name type="scientific">Arabidopsis thaliana</name>
    <name type="common">Mouse-ear cress</name>
    <dbReference type="NCBI Taxonomy" id="3702"/>
    <lineage>
        <taxon>Eukaryota</taxon>
        <taxon>Viridiplantae</taxon>
        <taxon>Streptophyta</taxon>
        <taxon>Embryophyta</taxon>
        <taxon>Tracheophyta</taxon>
        <taxon>Spermatophyta</taxon>
        <taxon>Magnoliopsida</taxon>
        <taxon>eudicotyledons</taxon>
        <taxon>Gunneridae</taxon>
        <taxon>Pentapetalae</taxon>
        <taxon>rosids</taxon>
        <taxon>malvids</taxon>
        <taxon>Brassicales</taxon>
        <taxon>Brassicaceae</taxon>
        <taxon>Camelineae</taxon>
        <taxon>Arabidopsis</taxon>
    </lineage>
</organism>